<organism>
    <name type="scientific">Staphylococcus epidermidis (strain ATCC 35984 / DSM 28319 / BCRC 17069 / CCUG 31568 / BM 3577 / RP62A)</name>
    <dbReference type="NCBI Taxonomy" id="176279"/>
    <lineage>
        <taxon>Bacteria</taxon>
        <taxon>Bacillati</taxon>
        <taxon>Bacillota</taxon>
        <taxon>Bacilli</taxon>
        <taxon>Bacillales</taxon>
        <taxon>Staphylococcaceae</taxon>
        <taxon>Staphylococcus</taxon>
    </lineage>
</organism>
<gene>
    <name evidence="1" type="primary">lrgA</name>
    <name type="ordered locus">SERP2026</name>
</gene>
<keyword id="KW-1003">Cell membrane</keyword>
<keyword id="KW-0204">Cytolysis</keyword>
<keyword id="KW-0472">Membrane</keyword>
<keyword id="KW-1185">Reference proteome</keyword>
<keyword id="KW-0812">Transmembrane</keyword>
<keyword id="KW-1133">Transmembrane helix</keyword>
<proteinExistence type="inferred from homology"/>
<evidence type="ECO:0000255" key="1">
    <source>
        <dbReference type="HAMAP-Rule" id="MF_01141"/>
    </source>
</evidence>
<feature type="chain" id="PRO_0000213198" description="Antiholin-like protein LrgA">
    <location>
        <begin position="1"/>
        <end position="152"/>
    </location>
</feature>
<feature type="transmembrane region" description="Helical" evidence="1">
    <location>
        <begin position="23"/>
        <end position="43"/>
    </location>
</feature>
<feature type="transmembrane region" description="Helical" evidence="1">
    <location>
        <begin position="45"/>
        <end position="65"/>
    </location>
</feature>
<feature type="transmembrane region" description="Helical" evidence="1">
    <location>
        <begin position="77"/>
        <end position="97"/>
    </location>
</feature>
<feature type="transmembrane region" description="Helical" evidence="1">
    <location>
        <begin position="108"/>
        <end position="128"/>
    </location>
</feature>
<protein>
    <recommendedName>
        <fullName evidence="1">Antiholin-like protein LrgA</fullName>
    </recommendedName>
</protein>
<reference key="1">
    <citation type="journal article" date="2005" name="J. Bacteriol.">
        <title>Insights on evolution of virulence and resistance from the complete genome analysis of an early methicillin-resistant Staphylococcus aureus strain and a biofilm-producing methicillin-resistant Staphylococcus epidermidis strain.</title>
        <authorList>
            <person name="Gill S.R."/>
            <person name="Fouts D.E."/>
            <person name="Archer G.L."/>
            <person name="Mongodin E.F."/>
            <person name="DeBoy R.T."/>
            <person name="Ravel J."/>
            <person name="Paulsen I.T."/>
            <person name="Kolonay J.F."/>
            <person name="Brinkac L.M."/>
            <person name="Beanan M.J."/>
            <person name="Dodson R.J."/>
            <person name="Daugherty S.C."/>
            <person name="Madupu R."/>
            <person name="Angiuoli S.V."/>
            <person name="Durkin A.S."/>
            <person name="Haft D.H."/>
            <person name="Vamathevan J.J."/>
            <person name="Khouri H."/>
            <person name="Utterback T.R."/>
            <person name="Lee C."/>
            <person name="Dimitrov G."/>
            <person name="Jiang L."/>
            <person name="Qin H."/>
            <person name="Weidman J."/>
            <person name="Tran K."/>
            <person name="Kang K.H."/>
            <person name="Hance I.R."/>
            <person name="Nelson K.E."/>
            <person name="Fraser C.M."/>
        </authorList>
    </citation>
    <scope>NUCLEOTIDE SEQUENCE [LARGE SCALE GENOMIC DNA]</scope>
    <source>
        <strain>ATCC 35984 / DSM 28319 / BCRC 17069 / CCUG 31568 / BM 3577 / RP62A</strain>
    </source>
</reference>
<sequence>MVILEQTHLVKNKTVDNKKSMKYSIFQQALTIAVILLISKIIESFMPIPMPASVIGLVLLFIALCTGIVKLGQVETVGTALTNNIGFLFVPAGISVINSLPILKQSPILIILLIIISTLLLLICTGFASQLLVTKSLFPSKEKNEETSHVGG</sequence>
<accession>Q5HLG1</accession>
<dbReference type="EMBL" id="CP000029">
    <property type="protein sequence ID" value="AAW52844.1"/>
    <property type="molecule type" value="Genomic_DNA"/>
</dbReference>
<dbReference type="SMR" id="Q5HLG1"/>
<dbReference type="STRING" id="176279.SERP2026"/>
<dbReference type="KEGG" id="ser:SERP2026"/>
<dbReference type="eggNOG" id="COG1380">
    <property type="taxonomic scope" value="Bacteria"/>
</dbReference>
<dbReference type="HOGENOM" id="CLU_113736_0_1_9"/>
<dbReference type="Proteomes" id="UP000000531">
    <property type="component" value="Chromosome"/>
</dbReference>
<dbReference type="GO" id="GO:0005886">
    <property type="term" value="C:plasma membrane"/>
    <property type="evidence" value="ECO:0007669"/>
    <property type="project" value="UniProtKB-SubCell"/>
</dbReference>
<dbReference type="GO" id="GO:0019835">
    <property type="term" value="P:cytolysis"/>
    <property type="evidence" value="ECO:0007669"/>
    <property type="project" value="UniProtKB-UniRule"/>
</dbReference>
<dbReference type="GO" id="GO:0031640">
    <property type="term" value="P:killing of cells of another organism"/>
    <property type="evidence" value="ECO:0007669"/>
    <property type="project" value="UniProtKB-KW"/>
</dbReference>
<dbReference type="GO" id="GO:0012501">
    <property type="term" value="P:programmed cell death"/>
    <property type="evidence" value="ECO:0007669"/>
    <property type="project" value="UniProtKB-UniRule"/>
</dbReference>
<dbReference type="HAMAP" id="MF_01141">
    <property type="entry name" value="LrgA"/>
    <property type="match status" value="1"/>
</dbReference>
<dbReference type="InterPro" id="IPR023736">
    <property type="entry name" value="Antiholin-like_LrgA"/>
</dbReference>
<dbReference type="InterPro" id="IPR005538">
    <property type="entry name" value="LrgA/CidA"/>
</dbReference>
<dbReference type="NCBIfam" id="NF003155">
    <property type="entry name" value="PRK04125.1"/>
    <property type="match status" value="1"/>
</dbReference>
<dbReference type="PANTHER" id="PTHR33931:SF4">
    <property type="entry name" value="ANTIHOLIN-LIKE PROTEIN LRGA"/>
    <property type="match status" value="1"/>
</dbReference>
<dbReference type="PANTHER" id="PTHR33931">
    <property type="entry name" value="HOLIN-LIKE PROTEIN CIDA-RELATED"/>
    <property type="match status" value="1"/>
</dbReference>
<dbReference type="Pfam" id="PF03788">
    <property type="entry name" value="LrgA"/>
    <property type="match status" value="1"/>
</dbReference>
<comment type="function">
    <text evidence="1">Inhibits the expression or activity of extracellular murein hydrolases by interacting, possibly with LrgB, with the holin-like proteins CidA and/or CidB. The LrgAB and CidAB proteins may affect the proton motive force of the membrane. May be involved in programmed cell death (PCD), possibly triggering PCD in response to antibiotics and environmental stresses.</text>
</comment>
<comment type="subcellular location">
    <subcellularLocation>
        <location evidence="1">Cell membrane</location>
        <topology evidence="1">Multi-pass membrane protein</topology>
    </subcellularLocation>
</comment>
<comment type="similarity">
    <text evidence="1">Belongs to the CidA/LrgA family. LrgA subfamily.</text>
</comment>
<name>LRGA_STAEQ</name>